<accession>A7GDQ3</accession>
<gene>
    <name evidence="1" type="primary">hisB</name>
    <name type="ordered locus">CLI_1650</name>
</gene>
<proteinExistence type="inferred from homology"/>
<name>HIS7_CLOBL</name>
<evidence type="ECO:0000255" key="1">
    <source>
        <dbReference type="HAMAP-Rule" id="MF_00076"/>
    </source>
</evidence>
<sequence>MKESIAKVYRKTGETEIKSEINLYGEGKYDIKTGIGFFDHMLNLMARHGLIDVKLEAKGDLQVDSHHTVEDVGIVLGESFKKALGDKKGIKRYGTSFVPMDEALASVSIDISGRPYIVCDFNFTVDKLGEMDTELVEEFLRALAFNAGITLHARVLYGKNNHHMIEAVFKALGRALREAVDIDERINGVMSTKGTL</sequence>
<feature type="chain" id="PRO_1000010270" description="Imidazoleglycerol-phosphate dehydratase">
    <location>
        <begin position="1"/>
        <end position="196"/>
    </location>
</feature>
<dbReference type="EC" id="4.2.1.19" evidence="1"/>
<dbReference type="EMBL" id="CP000728">
    <property type="protein sequence ID" value="ABS39862.1"/>
    <property type="molecule type" value="Genomic_DNA"/>
</dbReference>
<dbReference type="RefSeq" id="WP_012099672.1">
    <property type="nucleotide sequence ID" value="NC_009699.1"/>
</dbReference>
<dbReference type="SMR" id="A7GDQ3"/>
<dbReference type="KEGG" id="cbf:CLI_1650"/>
<dbReference type="HOGENOM" id="CLU_044308_2_0_9"/>
<dbReference type="UniPathway" id="UPA00031">
    <property type="reaction ID" value="UER00011"/>
</dbReference>
<dbReference type="Proteomes" id="UP000002410">
    <property type="component" value="Chromosome"/>
</dbReference>
<dbReference type="GO" id="GO:0005737">
    <property type="term" value="C:cytoplasm"/>
    <property type="evidence" value="ECO:0007669"/>
    <property type="project" value="UniProtKB-SubCell"/>
</dbReference>
<dbReference type="GO" id="GO:0004424">
    <property type="term" value="F:imidazoleglycerol-phosphate dehydratase activity"/>
    <property type="evidence" value="ECO:0007669"/>
    <property type="project" value="UniProtKB-UniRule"/>
</dbReference>
<dbReference type="GO" id="GO:0000105">
    <property type="term" value="P:L-histidine biosynthetic process"/>
    <property type="evidence" value="ECO:0007669"/>
    <property type="project" value="UniProtKB-UniRule"/>
</dbReference>
<dbReference type="CDD" id="cd07914">
    <property type="entry name" value="IGPD"/>
    <property type="match status" value="1"/>
</dbReference>
<dbReference type="FunFam" id="3.30.230.40:FF:000001">
    <property type="entry name" value="Imidazoleglycerol-phosphate dehydratase HisB"/>
    <property type="match status" value="1"/>
</dbReference>
<dbReference type="FunFam" id="3.30.230.40:FF:000003">
    <property type="entry name" value="Imidazoleglycerol-phosphate dehydratase HisB"/>
    <property type="match status" value="1"/>
</dbReference>
<dbReference type="Gene3D" id="3.30.230.40">
    <property type="entry name" value="Imidazole glycerol phosphate dehydratase, domain 1"/>
    <property type="match status" value="2"/>
</dbReference>
<dbReference type="HAMAP" id="MF_00076">
    <property type="entry name" value="HisB"/>
    <property type="match status" value="1"/>
</dbReference>
<dbReference type="InterPro" id="IPR038494">
    <property type="entry name" value="IGPD_sf"/>
</dbReference>
<dbReference type="InterPro" id="IPR000807">
    <property type="entry name" value="ImidazoleglycerolP_deHydtase"/>
</dbReference>
<dbReference type="InterPro" id="IPR020565">
    <property type="entry name" value="ImidazoleglycerP_deHydtase_CS"/>
</dbReference>
<dbReference type="InterPro" id="IPR020568">
    <property type="entry name" value="Ribosomal_Su5_D2-typ_SF"/>
</dbReference>
<dbReference type="NCBIfam" id="NF002107">
    <property type="entry name" value="PRK00951.1-2"/>
    <property type="match status" value="1"/>
</dbReference>
<dbReference type="NCBIfam" id="NF002109">
    <property type="entry name" value="PRK00951.1-5"/>
    <property type="match status" value="1"/>
</dbReference>
<dbReference type="NCBIfam" id="NF002111">
    <property type="entry name" value="PRK00951.2-1"/>
    <property type="match status" value="1"/>
</dbReference>
<dbReference type="NCBIfam" id="NF002112">
    <property type="entry name" value="PRK00951.2-2"/>
    <property type="match status" value="1"/>
</dbReference>
<dbReference type="NCBIfam" id="NF002114">
    <property type="entry name" value="PRK00951.2-4"/>
    <property type="match status" value="1"/>
</dbReference>
<dbReference type="NCBIfam" id="NF002116">
    <property type="entry name" value="PRK00951.2-6"/>
    <property type="match status" value="1"/>
</dbReference>
<dbReference type="PANTHER" id="PTHR23133:SF2">
    <property type="entry name" value="IMIDAZOLEGLYCEROL-PHOSPHATE DEHYDRATASE"/>
    <property type="match status" value="1"/>
</dbReference>
<dbReference type="PANTHER" id="PTHR23133">
    <property type="entry name" value="IMIDAZOLEGLYCEROL-PHOSPHATE DEHYDRATASE HIS7"/>
    <property type="match status" value="1"/>
</dbReference>
<dbReference type="Pfam" id="PF00475">
    <property type="entry name" value="IGPD"/>
    <property type="match status" value="1"/>
</dbReference>
<dbReference type="SUPFAM" id="SSF54211">
    <property type="entry name" value="Ribosomal protein S5 domain 2-like"/>
    <property type="match status" value="2"/>
</dbReference>
<dbReference type="PROSITE" id="PS00954">
    <property type="entry name" value="IGP_DEHYDRATASE_1"/>
    <property type="match status" value="1"/>
</dbReference>
<dbReference type="PROSITE" id="PS00955">
    <property type="entry name" value="IGP_DEHYDRATASE_2"/>
    <property type="match status" value="1"/>
</dbReference>
<organism>
    <name type="scientific">Clostridium botulinum (strain Langeland / NCTC 10281 / Type F)</name>
    <dbReference type="NCBI Taxonomy" id="441772"/>
    <lineage>
        <taxon>Bacteria</taxon>
        <taxon>Bacillati</taxon>
        <taxon>Bacillota</taxon>
        <taxon>Clostridia</taxon>
        <taxon>Eubacteriales</taxon>
        <taxon>Clostridiaceae</taxon>
        <taxon>Clostridium</taxon>
    </lineage>
</organism>
<keyword id="KW-0028">Amino-acid biosynthesis</keyword>
<keyword id="KW-0963">Cytoplasm</keyword>
<keyword id="KW-0368">Histidine biosynthesis</keyword>
<keyword id="KW-0456">Lyase</keyword>
<reference key="1">
    <citation type="submission" date="2007-06" db="EMBL/GenBank/DDBJ databases">
        <authorList>
            <person name="Brinkac L.M."/>
            <person name="Daugherty S."/>
            <person name="Dodson R.J."/>
            <person name="Madupu R."/>
            <person name="Brown J.L."/>
            <person name="Bruce D."/>
            <person name="Detter C."/>
            <person name="Munk C."/>
            <person name="Smith L.A."/>
            <person name="Smith T.J."/>
            <person name="White O."/>
            <person name="Brettin T.S."/>
        </authorList>
    </citation>
    <scope>NUCLEOTIDE SEQUENCE [LARGE SCALE GENOMIC DNA]</scope>
    <source>
        <strain>Langeland / NCTC 10281 / Type F</strain>
    </source>
</reference>
<comment type="catalytic activity">
    <reaction evidence="1">
        <text>D-erythro-1-(imidazol-4-yl)glycerol 3-phosphate = 3-(imidazol-4-yl)-2-oxopropyl phosphate + H2O</text>
        <dbReference type="Rhea" id="RHEA:11040"/>
        <dbReference type="ChEBI" id="CHEBI:15377"/>
        <dbReference type="ChEBI" id="CHEBI:57766"/>
        <dbReference type="ChEBI" id="CHEBI:58278"/>
        <dbReference type="EC" id="4.2.1.19"/>
    </reaction>
</comment>
<comment type="pathway">
    <text evidence="1">Amino-acid biosynthesis; L-histidine biosynthesis; L-histidine from 5-phospho-alpha-D-ribose 1-diphosphate: step 6/9.</text>
</comment>
<comment type="subcellular location">
    <subcellularLocation>
        <location evidence="1">Cytoplasm</location>
    </subcellularLocation>
</comment>
<comment type="similarity">
    <text evidence="1">Belongs to the imidazoleglycerol-phosphate dehydratase family.</text>
</comment>
<protein>
    <recommendedName>
        <fullName evidence="1">Imidazoleglycerol-phosphate dehydratase</fullName>
        <shortName evidence="1">IGPD</shortName>
        <ecNumber evidence="1">4.2.1.19</ecNumber>
    </recommendedName>
</protein>